<dbReference type="EC" id="2.5.1.7" evidence="1"/>
<dbReference type="EMBL" id="BX569693">
    <property type="protein sequence ID" value="CAE08148.1"/>
    <property type="molecule type" value="Genomic_DNA"/>
</dbReference>
<dbReference type="RefSeq" id="WP_011128497.1">
    <property type="nucleotide sequence ID" value="NC_005070.1"/>
</dbReference>
<dbReference type="SMR" id="Q7U5R6"/>
<dbReference type="STRING" id="84588.SYNW1633"/>
<dbReference type="KEGG" id="syw:SYNW1633"/>
<dbReference type="eggNOG" id="COG0766">
    <property type="taxonomic scope" value="Bacteria"/>
</dbReference>
<dbReference type="HOGENOM" id="CLU_027387_0_0_3"/>
<dbReference type="UniPathway" id="UPA00219"/>
<dbReference type="Proteomes" id="UP000001422">
    <property type="component" value="Chromosome"/>
</dbReference>
<dbReference type="GO" id="GO:0005737">
    <property type="term" value="C:cytoplasm"/>
    <property type="evidence" value="ECO:0007669"/>
    <property type="project" value="UniProtKB-SubCell"/>
</dbReference>
<dbReference type="GO" id="GO:0008760">
    <property type="term" value="F:UDP-N-acetylglucosamine 1-carboxyvinyltransferase activity"/>
    <property type="evidence" value="ECO:0007669"/>
    <property type="project" value="UniProtKB-UniRule"/>
</dbReference>
<dbReference type="GO" id="GO:0051301">
    <property type="term" value="P:cell division"/>
    <property type="evidence" value="ECO:0007669"/>
    <property type="project" value="UniProtKB-KW"/>
</dbReference>
<dbReference type="GO" id="GO:0071555">
    <property type="term" value="P:cell wall organization"/>
    <property type="evidence" value="ECO:0007669"/>
    <property type="project" value="UniProtKB-KW"/>
</dbReference>
<dbReference type="GO" id="GO:0009252">
    <property type="term" value="P:peptidoglycan biosynthetic process"/>
    <property type="evidence" value="ECO:0007669"/>
    <property type="project" value="UniProtKB-UniRule"/>
</dbReference>
<dbReference type="GO" id="GO:0008360">
    <property type="term" value="P:regulation of cell shape"/>
    <property type="evidence" value="ECO:0007669"/>
    <property type="project" value="UniProtKB-KW"/>
</dbReference>
<dbReference type="GO" id="GO:0019277">
    <property type="term" value="P:UDP-N-acetylgalactosamine biosynthetic process"/>
    <property type="evidence" value="ECO:0007669"/>
    <property type="project" value="InterPro"/>
</dbReference>
<dbReference type="CDD" id="cd01555">
    <property type="entry name" value="UdpNAET"/>
    <property type="match status" value="1"/>
</dbReference>
<dbReference type="Gene3D" id="3.65.10.10">
    <property type="entry name" value="Enolpyruvate transferase domain"/>
    <property type="match status" value="2"/>
</dbReference>
<dbReference type="HAMAP" id="MF_00111">
    <property type="entry name" value="MurA"/>
    <property type="match status" value="1"/>
</dbReference>
<dbReference type="InterPro" id="IPR001986">
    <property type="entry name" value="Enolpyruvate_Tfrase_dom"/>
</dbReference>
<dbReference type="InterPro" id="IPR036968">
    <property type="entry name" value="Enolpyruvate_Tfrase_sf"/>
</dbReference>
<dbReference type="InterPro" id="IPR050068">
    <property type="entry name" value="MurA_subfamily"/>
</dbReference>
<dbReference type="InterPro" id="IPR013792">
    <property type="entry name" value="RNA3'P_cycl/enolpyr_Trfase_a/b"/>
</dbReference>
<dbReference type="InterPro" id="IPR005750">
    <property type="entry name" value="UDP_GlcNAc_COvinyl_MurA"/>
</dbReference>
<dbReference type="NCBIfam" id="TIGR01072">
    <property type="entry name" value="murA"/>
    <property type="match status" value="1"/>
</dbReference>
<dbReference type="NCBIfam" id="NF006873">
    <property type="entry name" value="PRK09369.1"/>
    <property type="match status" value="1"/>
</dbReference>
<dbReference type="PANTHER" id="PTHR43783">
    <property type="entry name" value="UDP-N-ACETYLGLUCOSAMINE 1-CARBOXYVINYLTRANSFERASE"/>
    <property type="match status" value="1"/>
</dbReference>
<dbReference type="PANTHER" id="PTHR43783:SF1">
    <property type="entry name" value="UDP-N-ACETYLGLUCOSAMINE 1-CARBOXYVINYLTRANSFERASE"/>
    <property type="match status" value="1"/>
</dbReference>
<dbReference type="Pfam" id="PF00275">
    <property type="entry name" value="EPSP_synthase"/>
    <property type="match status" value="1"/>
</dbReference>
<dbReference type="SUPFAM" id="SSF55205">
    <property type="entry name" value="EPT/RTPC-like"/>
    <property type="match status" value="1"/>
</dbReference>
<sequence>MTVASTVSQEILNHCLAIEGQRRLQGVLKVSGAKNSALVLMTASLLTEELVELINVPNLTDIAGMGRILSALGVQVEHSGNGVALNAGNLTSHEPPYELVNSLRASFFCIGSLLGRLGHARVPLPGGCRIGARPVVEHIRGLKALGAHVSVEHGIVSACVKGSKKRLTGAPIVLDCPSVGATETLLMAAVLATGTTTIENAAHEPEVQDLANLLIQMGADISGAGGPVITIHGVERLAGVSNYPVIPDRIEAGTFLIAAAITRSPLRVEPVIPEHLSAVLQKLRDCGCQLEIDQTGISITPGDIQAVDITTQPFPGFPTDLQAPFMALMATAQGTSVISEKIYENRLQHVAELQRMGASIRVDGSTAIVEGVAQLSAAPVTGSDLRAAAAMVLAGLAANGTTKVSGLKHLYRGYDKVEAKLNAVGAQLERQQG</sequence>
<comment type="function">
    <text evidence="1">Cell wall formation. Adds enolpyruvyl to UDP-N-acetylglucosamine.</text>
</comment>
<comment type="catalytic activity">
    <reaction evidence="1">
        <text>phosphoenolpyruvate + UDP-N-acetyl-alpha-D-glucosamine = UDP-N-acetyl-3-O-(1-carboxyvinyl)-alpha-D-glucosamine + phosphate</text>
        <dbReference type="Rhea" id="RHEA:18681"/>
        <dbReference type="ChEBI" id="CHEBI:43474"/>
        <dbReference type="ChEBI" id="CHEBI:57705"/>
        <dbReference type="ChEBI" id="CHEBI:58702"/>
        <dbReference type="ChEBI" id="CHEBI:68483"/>
        <dbReference type="EC" id="2.5.1.7"/>
    </reaction>
</comment>
<comment type="pathway">
    <text evidence="1">Cell wall biogenesis; peptidoglycan biosynthesis.</text>
</comment>
<comment type="subcellular location">
    <subcellularLocation>
        <location evidence="1">Cytoplasm</location>
    </subcellularLocation>
</comment>
<comment type="similarity">
    <text evidence="1">Belongs to the EPSP synthase family. MurA subfamily.</text>
</comment>
<evidence type="ECO:0000255" key="1">
    <source>
        <dbReference type="HAMAP-Rule" id="MF_00111"/>
    </source>
</evidence>
<name>MURA_PARMW</name>
<feature type="chain" id="PRO_0000231289" description="UDP-N-acetylglucosamine 1-carboxyvinyltransferase">
    <location>
        <begin position="1"/>
        <end position="433"/>
    </location>
</feature>
<feature type="active site" description="Proton donor" evidence="1">
    <location>
        <position position="128"/>
    </location>
</feature>
<feature type="binding site" evidence="1">
    <location>
        <begin position="34"/>
        <end position="35"/>
    </location>
    <ligand>
        <name>phosphoenolpyruvate</name>
        <dbReference type="ChEBI" id="CHEBI:58702"/>
    </ligand>
</feature>
<feature type="binding site" evidence="1">
    <location>
        <position position="104"/>
    </location>
    <ligand>
        <name>UDP-N-acetyl-alpha-D-glucosamine</name>
        <dbReference type="ChEBI" id="CHEBI:57705"/>
    </ligand>
</feature>
<feature type="binding site" evidence="1">
    <location>
        <position position="320"/>
    </location>
    <ligand>
        <name>UDP-N-acetyl-alpha-D-glucosamine</name>
        <dbReference type="ChEBI" id="CHEBI:57705"/>
    </ligand>
</feature>
<feature type="binding site" evidence="1">
    <location>
        <position position="342"/>
    </location>
    <ligand>
        <name>UDP-N-acetyl-alpha-D-glucosamine</name>
        <dbReference type="ChEBI" id="CHEBI:57705"/>
    </ligand>
</feature>
<feature type="modified residue" description="2-(S-cysteinyl)pyruvic acid O-phosphothioketal" evidence="1">
    <location>
        <position position="128"/>
    </location>
</feature>
<proteinExistence type="inferred from homology"/>
<keyword id="KW-0131">Cell cycle</keyword>
<keyword id="KW-0132">Cell division</keyword>
<keyword id="KW-0133">Cell shape</keyword>
<keyword id="KW-0961">Cell wall biogenesis/degradation</keyword>
<keyword id="KW-0963">Cytoplasm</keyword>
<keyword id="KW-0573">Peptidoglycan synthesis</keyword>
<keyword id="KW-0670">Pyruvate</keyword>
<keyword id="KW-0808">Transferase</keyword>
<gene>
    <name evidence="1" type="primary">murA</name>
    <name type="ordered locus">SYNW1633</name>
</gene>
<organism>
    <name type="scientific">Parasynechococcus marenigrum (strain WH8102)</name>
    <dbReference type="NCBI Taxonomy" id="84588"/>
    <lineage>
        <taxon>Bacteria</taxon>
        <taxon>Bacillati</taxon>
        <taxon>Cyanobacteriota</taxon>
        <taxon>Cyanophyceae</taxon>
        <taxon>Synechococcales</taxon>
        <taxon>Prochlorococcaceae</taxon>
        <taxon>Parasynechococcus</taxon>
        <taxon>Parasynechococcus marenigrum</taxon>
    </lineage>
</organism>
<reference key="1">
    <citation type="journal article" date="2003" name="Nature">
        <title>The genome of a motile marine Synechococcus.</title>
        <authorList>
            <person name="Palenik B."/>
            <person name="Brahamsha B."/>
            <person name="Larimer F.W."/>
            <person name="Land M.L."/>
            <person name="Hauser L."/>
            <person name="Chain P."/>
            <person name="Lamerdin J.E."/>
            <person name="Regala W."/>
            <person name="Allen E.E."/>
            <person name="McCarren J."/>
            <person name="Paulsen I.T."/>
            <person name="Dufresne A."/>
            <person name="Partensky F."/>
            <person name="Webb E.A."/>
            <person name="Waterbury J."/>
        </authorList>
    </citation>
    <scope>NUCLEOTIDE SEQUENCE [LARGE SCALE GENOMIC DNA]</scope>
    <source>
        <strain>WH8102</strain>
    </source>
</reference>
<accession>Q7U5R6</accession>
<protein>
    <recommendedName>
        <fullName evidence="1">UDP-N-acetylglucosamine 1-carboxyvinyltransferase</fullName>
        <ecNumber evidence="1">2.5.1.7</ecNumber>
    </recommendedName>
    <alternativeName>
        <fullName evidence="1">Enoylpyruvate transferase</fullName>
    </alternativeName>
    <alternativeName>
        <fullName evidence="1">UDP-N-acetylglucosamine enolpyruvyl transferase</fullName>
        <shortName evidence="1">EPT</shortName>
    </alternativeName>
</protein>